<keyword id="KW-0249">Electron transport</keyword>
<keyword id="KW-0349">Heme</keyword>
<keyword id="KW-0408">Iron</keyword>
<keyword id="KW-0472">Membrane</keyword>
<keyword id="KW-0479">Metal-binding</keyword>
<keyword id="KW-0496">Mitochondrion</keyword>
<keyword id="KW-0999">Mitochondrion inner membrane</keyword>
<keyword id="KW-0679">Respiratory chain</keyword>
<keyword id="KW-0812">Transmembrane</keyword>
<keyword id="KW-1133">Transmembrane helix</keyword>
<keyword id="KW-0813">Transport</keyword>
<keyword id="KW-0830">Ubiquinone</keyword>
<feature type="chain" id="PRO_0000061505" description="Cytochrome b">
    <location>
        <begin position="1"/>
        <end position="380"/>
    </location>
</feature>
<feature type="transmembrane region" description="Helical" evidence="2">
    <location>
        <begin position="33"/>
        <end position="53"/>
    </location>
</feature>
<feature type="transmembrane region" description="Helical" evidence="2">
    <location>
        <begin position="77"/>
        <end position="98"/>
    </location>
</feature>
<feature type="transmembrane region" description="Helical" evidence="2">
    <location>
        <begin position="113"/>
        <end position="133"/>
    </location>
</feature>
<feature type="transmembrane region" description="Helical" evidence="2">
    <location>
        <begin position="178"/>
        <end position="198"/>
    </location>
</feature>
<feature type="transmembrane region" description="Helical" evidence="2">
    <location>
        <begin position="226"/>
        <end position="246"/>
    </location>
</feature>
<feature type="transmembrane region" description="Helical" evidence="2">
    <location>
        <begin position="288"/>
        <end position="308"/>
    </location>
</feature>
<feature type="transmembrane region" description="Helical" evidence="2">
    <location>
        <begin position="320"/>
        <end position="340"/>
    </location>
</feature>
<feature type="transmembrane region" description="Helical" evidence="2">
    <location>
        <begin position="347"/>
        <end position="367"/>
    </location>
</feature>
<feature type="binding site" description="axial binding residue" evidence="2">
    <location>
        <position position="83"/>
    </location>
    <ligand>
        <name>heme b</name>
        <dbReference type="ChEBI" id="CHEBI:60344"/>
        <label>b562</label>
    </ligand>
    <ligandPart>
        <name>Fe</name>
        <dbReference type="ChEBI" id="CHEBI:18248"/>
    </ligandPart>
</feature>
<feature type="binding site" description="axial binding residue" evidence="2">
    <location>
        <position position="97"/>
    </location>
    <ligand>
        <name>heme b</name>
        <dbReference type="ChEBI" id="CHEBI:60344"/>
        <label>b566</label>
    </ligand>
    <ligandPart>
        <name>Fe</name>
        <dbReference type="ChEBI" id="CHEBI:18248"/>
    </ligandPart>
</feature>
<feature type="binding site" description="axial binding residue" evidence="2">
    <location>
        <position position="182"/>
    </location>
    <ligand>
        <name>heme b</name>
        <dbReference type="ChEBI" id="CHEBI:60344"/>
        <label>b562</label>
    </ligand>
    <ligandPart>
        <name>Fe</name>
        <dbReference type="ChEBI" id="CHEBI:18248"/>
    </ligandPart>
</feature>
<feature type="binding site" description="axial binding residue" evidence="2">
    <location>
        <position position="196"/>
    </location>
    <ligand>
        <name>heme b</name>
        <dbReference type="ChEBI" id="CHEBI:60344"/>
        <label>b566</label>
    </ligand>
    <ligandPart>
        <name>Fe</name>
        <dbReference type="ChEBI" id="CHEBI:18248"/>
    </ligandPart>
</feature>
<feature type="binding site" evidence="2">
    <location>
        <position position="201"/>
    </location>
    <ligand>
        <name>a ubiquinone</name>
        <dbReference type="ChEBI" id="CHEBI:16389"/>
    </ligand>
</feature>
<dbReference type="EMBL" id="AF108680">
    <property type="protein sequence ID" value="AAD45462.1"/>
    <property type="molecule type" value="Genomic_DNA"/>
</dbReference>
<dbReference type="GO" id="GO:0005743">
    <property type="term" value="C:mitochondrial inner membrane"/>
    <property type="evidence" value="ECO:0007669"/>
    <property type="project" value="UniProtKB-SubCell"/>
</dbReference>
<dbReference type="GO" id="GO:0045275">
    <property type="term" value="C:respiratory chain complex III"/>
    <property type="evidence" value="ECO:0007669"/>
    <property type="project" value="InterPro"/>
</dbReference>
<dbReference type="GO" id="GO:0046872">
    <property type="term" value="F:metal ion binding"/>
    <property type="evidence" value="ECO:0007669"/>
    <property type="project" value="UniProtKB-KW"/>
</dbReference>
<dbReference type="GO" id="GO:0008121">
    <property type="term" value="F:ubiquinol-cytochrome-c reductase activity"/>
    <property type="evidence" value="ECO:0007669"/>
    <property type="project" value="InterPro"/>
</dbReference>
<dbReference type="GO" id="GO:0006122">
    <property type="term" value="P:mitochondrial electron transport, ubiquinol to cytochrome c"/>
    <property type="evidence" value="ECO:0007669"/>
    <property type="project" value="TreeGrafter"/>
</dbReference>
<dbReference type="CDD" id="cd00290">
    <property type="entry name" value="cytochrome_b_C"/>
    <property type="match status" value="1"/>
</dbReference>
<dbReference type="CDD" id="cd00284">
    <property type="entry name" value="Cytochrome_b_N"/>
    <property type="match status" value="1"/>
</dbReference>
<dbReference type="FunFam" id="1.20.810.10:FF:000002">
    <property type="entry name" value="Cytochrome b"/>
    <property type="match status" value="1"/>
</dbReference>
<dbReference type="Gene3D" id="1.20.810.10">
    <property type="entry name" value="Cytochrome Bc1 Complex, Chain C"/>
    <property type="match status" value="1"/>
</dbReference>
<dbReference type="InterPro" id="IPR005798">
    <property type="entry name" value="Cyt_b/b6_C"/>
</dbReference>
<dbReference type="InterPro" id="IPR036150">
    <property type="entry name" value="Cyt_b/b6_C_sf"/>
</dbReference>
<dbReference type="InterPro" id="IPR005797">
    <property type="entry name" value="Cyt_b/b6_N"/>
</dbReference>
<dbReference type="InterPro" id="IPR027387">
    <property type="entry name" value="Cytb/b6-like_sf"/>
</dbReference>
<dbReference type="InterPro" id="IPR030689">
    <property type="entry name" value="Cytochrome_b"/>
</dbReference>
<dbReference type="InterPro" id="IPR048260">
    <property type="entry name" value="Cytochrome_b_C_euk/bac"/>
</dbReference>
<dbReference type="InterPro" id="IPR048259">
    <property type="entry name" value="Cytochrome_b_N_euk/bac"/>
</dbReference>
<dbReference type="InterPro" id="IPR016174">
    <property type="entry name" value="Di-haem_cyt_TM"/>
</dbReference>
<dbReference type="PANTHER" id="PTHR19271">
    <property type="entry name" value="CYTOCHROME B"/>
    <property type="match status" value="1"/>
</dbReference>
<dbReference type="PANTHER" id="PTHR19271:SF16">
    <property type="entry name" value="CYTOCHROME B"/>
    <property type="match status" value="1"/>
</dbReference>
<dbReference type="Pfam" id="PF00032">
    <property type="entry name" value="Cytochrom_B_C"/>
    <property type="match status" value="1"/>
</dbReference>
<dbReference type="Pfam" id="PF00033">
    <property type="entry name" value="Cytochrome_B"/>
    <property type="match status" value="1"/>
</dbReference>
<dbReference type="PIRSF" id="PIRSF038885">
    <property type="entry name" value="COB"/>
    <property type="match status" value="1"/>
</dbReference>
<dbReference type="SUPFAM" id="SSF81648">
    <property type="entry name" value="a domain/subunit of cytochrome bc1 complex (Ubiquinol-cytochrome c reductase)"/>
    <property type="match status" value="1"/>
</dbReference>
<dbReference type="SUPFAM" id="SSF81342">
    <property type="entry name" value="Transmembrane di-heme cytochromes"/>
    <property type="match status" value="1"/>
</dbReference>
<dbReference type="PROSITE" id="PS51003">
    <property type="entry name" value="CYTB_CTER"/>
    <property type="match status" value="1"/>
</dbReference>
<dbReference type="PROSITE" id="PS51002">
    <property type="entry name" value="CYTB_NTER"/>
    <property type="match status" value="1"/>
</dbReference>
<accession>Q9XNW4</accession>
<gene>
    <name type="primary">MT-CYB</name>
    <name type="synonym">COB</name>
    <name type="synonym">CYTB</name>
    <name type="synonym">MTCYB</name>
</gene>
<reference key="1">
    <citation type="journal article" date="1999" name="J. Mammal. Evol.">
        <title>Phylogenetic relationships and the radiation of sigmodontine rodents in South America: evidence from cytochrome b.</title>
        <authorList>
            <person name="Smith M.F."/>
            <person name="Patton J.L."/>
        </authorList>
    </citation>
    <scope>NUCLEOTIDE SEQUENCE [GENOMIC DNA]</scope>
    <source>
        <strain>Isolate USNM 560658</strain>
    </source>
</reference>
<sequence length="380" mass="42663">MTIMRKKHPLLKMINHSFIDLPTPSNISSWWNFGSLLGMCLMIQILTGLFLAMHYTSDTTTAFSSVAHICRDVNYGWLIRYLHANGASMFFICLFIHVGRGIYYGSYMLLETWNIGIVLLLTTMATAFVGYVLPWGQMSFWGATVITNLLSAIPYXGNTLVEWIWGGFSVDKATLTRFFAFHFILPFIITALVLVHLLFLHETGSNNPSGLDSNSDKIPFHPYYTIKDLLGALILLMVLMILVLFFPDVLGDPDNYTPANPLNTPAHIKPEWYFLFAYAILRSIPNKLGGVLALILSILILATLPLLNSSKQHGLIYRPITQALYWIFVANLLTXTWIGGQPVEXPFTLIGXIASXLXFXIIIIFMPIASTIXNNIPXLH</sequence>
<evidence type="ECO:0000250" key="1"/>
<evidence type="ECO:0000250" key="2">
    <source>
        <dbReference type="UniProtKB" id="P00157"/>
    </source>
</evidence>
<evidence type="ECO:0000255" key="3">
    <source>
        <dbReference type="PROSITE-ProRule" id="PRU00967"/>
    </source>
</evidence>
<evidence type="ECO:0000255" key="4">
    <source>
        <dbReference type="PROSITE-ProRule" id="PRU00968"/>
    </source>
</evidence>
<comment type="function">
    <text evidence="2">Component of the ubiquinol-cytochrome c reductase complex (complex III or cytochrome b-c1 complex) that is part of the mitochondrial respiratory chain. The b-c1 complex mediates electron transfer from ubiquinol to cytochrome c. Contributes to the generation of a proton gradient across the mitochondrial membrane that is then used for ATP synthesis.</text>
</comment>
<comment type="cofactor">
    <cofactor evidence="2">
        <name>heme b</name>
        <dbReference type="ChEBI" id="CHEBI:60344"/>
    </cofactor>
    <text evidence="2">Binds 2 heme b groups non-covalently.</text>
</comment>
<comment type="subunit">
    <text evidence="2">The cytochrome bc1 complex contains 11 subunits: 3 respiratory subunits (MT-CYB, CYC1 and UQCRFS1), 2 core proteins (UQCRC1 and UQCRC2) and 6 low-molecular weight proteins (UQCRH/QCR6, UQCRB/QCR7, UQCRQ/QCR8, UQCR10/QCR9, UQCR11/QCR10 and a cleavage product of UQCRFS1). This cytochrome bc1 complex then forms a dimer.</text>
</comment>
<comment type="subcellular location">
    <subcellularLocation>
        <location evidence="2">Mitochondrion inner membrane</location>
        <topology evidence="2">Multi-pass membrane protein</topology>
    </subcellularLocation>
</comment>
<comment type="miscellaneous">
    <text evidence="1">Heme 1 (or BL or b562) is low-potential and absorbs at about 562 nm, and heme 2 (or BH or b566) is high-potential and absorbs at about 566 nm.</text>
</comment>
<comment type="similarity">
    <text evidence="3 4">Belongs to the cytochrome b family.</text>
</comment>
<comment type="caution">
    <text evidence="2">The full-length protein contains only eight transmembrane helices, not nine as predicted by bioinformatics tools.</text>
</comment>
<name>CYB_RHIWE</name>
<proteinExistence type="inferred from homology"/>
<protein>
    <recommendedName>
        <fullName>Cytochrome b</fullName>
    </recommendedName>
    <alternativeName>
        <fullName>Complex III subunit 3</fullName>
    </alternativeName>
    <alternativeName>
        <fullName>Complex III subunit III</fullName>
    </alternativeName>
    <alternativeName>
        <fullName>Cytochrome b-c1 complex subunit 3</fullName>
    </alternativeName>
    <alternativeName>
        <fullName>Ubiquinol-cytochrome-c reductase complex cytochrome b subunit</fullName>
    </alternativeName>
</protein>
<organism>
    <name type="scientific">Rhipidomys wetzeli</name>
    <name type="common">Wetzel's climbing mouse</name>
    <dbReference type="NCBI Taxonomy" id="89106"/>
    <lineage>
        <taxon>Eukaryota</taxon>
        <taxon>Metazoa</taxon>
        <taxon>Chordata</taxon>
        <taxon>Craniata</taxon>
        <taxon>Vertebrata</taxon>
        <taxon>Euteleostomi</taxon>
        <taxon>Mammalia</taxon>
        <taxon>Eutheria</taxon>
        <taxon>Euarchontoglires</taxon>
        <taxon>Glires</taxon>
        <taxon>Rodentia</taxon>
        <taxon>Myomorpha</taxon>
        <taxon>Muroidea</taxon>
        <taxon>Cricetidae</taxon>
        <taxon>Sigmodontinae</taxon>
        <taxon>Rhipidomys</taxon>
    </lineage>
</organism>
<geneLocation type="mitochondrion"/>